<comment type="catalytic activity">
    <reaction evidence="1">
        <text>CMP + ATP = CDP + ADP</text>
        <dbReference type="Rhea" id="RHEA:11600"/>
        <dbReference type="ChEBI" id="CHEBI:30616"/>
        <dbReference type="ChEBI" id="CHEBI:58069"/>
        <dbReference type="ChEBI" id="CHEBI:60377"/>
        <dbReference type="ChEBI" id="CHEBI:456216"/>
        <dbReference type="EC" id="2.7.4.25"/>
    </reaction>
</comment>
<comment type="catalytic activity">
    <reaction evidence="1">
        <text>dCMP + ATP = dCDP + ADP</text>
        <dbReference type="Rhea" id="RHEA:25094"/>
        <dbReference type="ChEBI" id="CHEBI:30616"/>
        <dbReference type="ChEBI" id="CHEBI:57566"/>
        <dbReference type="ChEBI" id="CHEBI:58593"/>
        <dbReference type="ChEBI" id="CHEBI:456216"/>
        <dbReference type="EC" id="2.7.4.25"/>
    </reaction>
</comment>
<comment type="subcellular location">
    <subcellularLocation>
        <location evidence="1">Cytoplasm</location>
    </subcellularLocation>
</comment>
<comment type="similarity">
    <text evidence="1">Belongs to the cytidylate kinase family. Type 1 subfamily.</text>
</comment>
<reference key="1">
    <citation type="submission" date="1999-09" db="EMBL/GenBank/DDBJ databases">
        <title>Bordetella bronchiseptica aroA.</title>
        <authorList>
            <person name="McArthur J.D."/>
            <person name="Walker M.J."/>
        </authorList>
    </citation>
    <scope>NUCLEOTIDE SEQUENCE [GENOMIC DNA]</scope>
    <source>
        <strain>240/2</strain>
    </source>
</reference>
<reference key="2">
    <citation type="journal article" date="2003" name="Nat. Genet.">
        <title>Comparative analysis of the genome sequences of Bordetella pertussis, Bordetella parapertussis and Bordetella bronchiseptica.</title>
        <authorList>
            <person name="Parkhill J."/>
            <person name="Sebaihia M."/>
            <person name="Preston A."/>
            <person name="Murphy L.D."/>
            <person name="Thomson N.R."/>
            <person name="Harris D.E."/>
            <person name="Holden M.T.G."/>
            <person name="Churcher C.M."/>
            <person name="Bentley S.D."/>
            <person name="Mungall K.L."/>
            <person name="Cerdeno-Tarraga A.-M."/>
            <person name="Temple L."/>
            <person name="James K.D."/>
            <person name="Harris B."/>
            <person name="Quail M.A."/>
            <person name="Achtman M."/>
            <person name="Atkin R."/>
            <person name="Baker S."/>
            <person name="Basham D."/>
            <person name="Bason N."/>
            <person name="Cherevach I."/>
            <person name="Chillingworth T."/>
            <person name="Collins M."/>
            <person name="Cronin A."/>
            <person name="Davis P."/>
            <person name="Doggett J."/>
            <person name="Feltwell T."/>
            <person name="Goble A."/>
            <person name="Hamlin N."/>
            <person name="Hauser H."/>
            <person name="Holroyd S."/>
            <person name="Jagels K."/>
            <person name="Leather S."/>
            <person name="Moule S."/>
            <person name="Norberczak H."/>
            <person name="O'Neil S."/>
            <person name="Ormond D."/>
            <person name="Price C."/>
            <person name="Rabbinowitsch E."/>
            <person name="Rutter S."/>
            <person name="Sanders M."/>
            <person name="Saunders D."/>
            <person name="Seeger K."/>
            <person name="Sharp S."/>
            <person name="Simmonds M."/>
            <person name="Skelton J."/>
            <person name="Squares R."/>
            <person name="Squares S."/>
            <person name="Stevens K."/>
            <person name="Unwin L."/>
            <person name="Whitehead S."/>
            <person name="Barrell B.G."/>
            <person name="Maskell D.J."/>
        </authorList>
    </citation>
    <scope>NUCLEOTIDE SEQUENCE [LARGE SCALE GENOMIC DNA]</scope>
    <source>
        <strain>ATCC BAA-588 / NCTC 13252 / RB50</strain>
    </source>
</reference>
<name>KCY_BORBR</name>
<feature type="chain" id="PRO_0000131885" description="Cytidylate kinase">
    <location>
        <begin position="1"/>
        <end position="223"/>
    </location>
</feature>
<feature type="binding site" evidence="1">
    <location>
        <begin position="17"/>
        <end position="25"/>
    </location>
    <ligand>
        <name>ATP</name>
        <dbReference type="ChEBI" id="CHEBI:30616"/>
    </ligand>
</feature>
<gene>
    <name evidence="1" type="primary">cmk</name>
    <name type="synonym">mssA</name>
    <name type="ordered locus">BB3468</name>
</gene>
<proteinExistence type="inferred from homology"/>
<protein>
    <recommendedName>
        <fullName evidence="1">Cytidylate kinase</fullName>
        <shortName evidence="1">CK</shortName>
        <ecNumber evidence="1">2.7.4.25</ecNumber>
    </recommendedName>
    <alternativeName>
        <fullName evidence="1">Cytidine monophosphate kinase</fullName>
        <shortName evidence="1">CMP kinase</shortName>
    </alternativeName>
</protein>
<accession>Q9RND6</accession>
<organism>
    <name type="scientific">Bordetella bronchiseptica (strain ATCC BAA-588 / NCTC 13252 / RB50)</name>
    <name type="common">Alcaligenes bronchisepticus</name>
    <dbReference type="NCBI Taxonomy" id="257310"/>
    <lineage>
        <taxon>Bacteria</taxon>
        <taxon>Pseudomonadati</taxon>
        <taxon>Pseudomonadota</taxon>
        <taxon>Betaproteobacteria</taxon>
        <taxon>Burkholderiales</taxon>
        <taxon>Alcaligenaceae</taxon>
        <taxon>Bordetella</taxon>
    </lineage>
</organism>
<keyword id="KW-0067">ATP-binding</keyword>
<keyword id="KW-0963">Cytoplasm</keyword>
<keyword id="KW-0418">Kinase</keyword>
<keyword id="KW-0547">Nucleotide-binding</keyword>
<keyword id="KW-0808">Transferase</keyword>
<evidence type="ECO:0000255" key="1">
    <source>
        <dbReference type="HAMAP-Rule" id="MF_00238"/>
    </source>
</evidence>
<dbReference type="EC" id="2.7.4.25" evidence="1"/>
<dbReference type="EMBL" id="AF182427">
    <property type="protein sequence ID" value="AAF01291.1"/>
    <property type="molecule type" value="Genomic_DNA"/>
</dbReference>
<dbReference type="EMBL" id="BX640447">
    <property type="protein sequence ID" value="CAE33960.1"/>
    <property type="molecule type" value="Genomic_DNA"/>
</dbReference>
<dbReference type="RefSeq" id="WP_003813361.1">
    <property type="nucleotide sequence ID" value="NC_002927.3"/>
</dbReference>
<dbReference type="SMR" id="Q9RND6"/>
<dbReference type="GeneID" id="56477933"/>
<dbReference type="KEGG" id="bbr:BB3468"/>
<dbReference type="eggNOG" id="COG0283">
    <property type="taxonomic scope" value="Bacteria"/>
</dbReference>
<dbReference type="HOGENOM" id="CLU_079959_2_0_4"/>
<dbReference type="Proteomes" id="UP000001027">
    <property type="component" value="Chromosome"/>
</dbReference>
<dbReference type="GO" id="GO:0005829">
    <property type="term" value="C:cytosol"/>
    <property type="evidence" value="ECO:0007669"/>
    <property type="project" value="TreeGrafter"/>
</dbReference>
<dbReference type="GO" id="GO:0005524">
    <property type="term" value="F:ATP binding"/>
    <property type="evidence" value="ECO:0007669"/>
    <property type="project" value="UniProtKB-UniRule"/>
</dbReference>
<dbReference type="GO" id="GO:0036430">
    <property type="term" value="F:CMP kinase activity"/>
    <property type="evidence" value="ECO:0007669"/>
    <property type="project" value="RHEA"/>
</dbReference>
<dbReference type="GO" id="GO:0036431">
    <property type="term" value="F:dCMP kinase activity"/>
    <property type="evidence" value="ECO:0007669"/>
    <property type="project" value="RHEA"/>
</dbReference>
<dbReference type="GO" id="GO:0015949">
    <property type="term" value="P:nucleobase-containing small molecule interconversion"/>
    <property type="evidence" value="ECO:0007669"/>
    <property type="project" value="TreeGrafter"/>
</dbReference>
<dbReference type="GO" id="GO:0006220">
    <property type="term" value="P:pyrimidine nucleotide metabolic process"/>
    <property type="evidence" value="ECO:0007669"/>
    <property type="project" value="UniProtKB-UniRule"/>
</dbReference>
<dbReference type="CDD" id="cd02020">
    <property type="entry name" value="CMPK"/>
    <property type="match status" value="1"/>
</dbReference>
<dbReference type="Gene3D" id="3.40.50.300">
    <property type="entry name" value="P-loop containing nucleotide triphosphate hydrolases"/>
    <property type="match status" value="1"/>
</dbReference>
<dbReference type="HAMAP" id="MF_00238">
    <property type="entry name" value="Cytidyl_kinase_type1"/>
    <property type="match status" value="1"/>
</dbReference>
<dbReference type="InterPro" id="IPR003136">
    <property type="entry name" value="Cytidylate_kin"/>
</dbReference>
<dbReference type="InterPro" id="IPR011994">
    <property type="entry name" value="Cytidylate_kinase_dom"/>
</dbReference>
<dbReference type="InterPro" id="IPR027417">
    <property type="entry name" value="P-loop_NTPase"/>
</dbReference>
<dbReference type="NCBIfam" id="TIGR00017">
    <property type="entry name" value="cmk"/>
    <property type="match status" value="1"/>
</dbReference>
<dbReference type="PANTHER" id="PTHR21299:SF2">
    <property type="entry name" value="CYTIDYLATE KINASE"/>
    <property type="match status" value="1"/>
</dbReference>
<dbReference type="PANTHER" id="PTHR21299">
    <property type="entry name" value="CYTIDYLATE KINASE/PANTOATE-BETA-ALANINE LIGASE"/>
    <property type="match status" value="1"/>
</dbReference>
<dbReference type="Pfam" id="PF02224">
    <property type="entry name" value="Cytidylate_kin"/>
    <property type="match status" value="1"/>
</dbReference>
<dbReference type="SUPFAM" id="SSF52540">
    <property type="entry name" value="P-loop containing nucleoside triphosphate hydrolases"/>
    <property type="match status" value="1"/>
</dbReference>
<sequence length="223" mass="23926">MAISASAGAAPVITIDGPTASGKGTIAHRVAKQLGWDVLDSGALYRLTALAALRRGLPATDEPAVAAVAQALDVRFDGPHVYLEGRDAGHEIRQEEVGNYASRIAAYPGVRQALLERQRAFRQPPGLVADGRDMGTVVFPDASLKIFLVADVEARAQRRCKQLIEKGISANLDDLLRDMRERDARDTQRAVAPLAPAADAHVLDSSGLTIEQTVQAVLDFWRA</sequence>